<protein>
    <recommendedName>
        <fullName evidence="4">Serum amyloid A-2 protein</fullName>
    </recommendedName>
    <component>
        <recommendedName>
            <fullName evidence="1">Amyloid protein AA1</fullName>
        </recommendedName>
        <alternativeName>
            <fullName evidence="1">Protein AA1</fullName>
            <shortName evidence="1">AA1</shortName>
        </alternativeName>
    </component>
    <component>
        <recommendedName>
            <fullName evidence="1">Amyloid protein AA2</fullName>
        </recommendedName>
        <alternativeName>
            <fullName evidence="1">Protein AA2</fullName>
            <shortName evidence="1">AA2</shortName>
        </alternativeName>
    </component>
</protein>
<dbReference type="EMBL" id="JH114990">
    <property type="status" value="NOT_ANNOTATED_CDS"/>
    <property type="molecule type" value="Genomic_DNA"/>
</dbReference>
<dbReference type="RefSeq" id="XP_003122985.1">
    <property type="nucleotide sequence ID" value="XM_003122937.3"/>
</dbReference>
<dbReference type="RefSeq" id="XP_005661152.1">
    <property type="nucleotide sequence ID" value="XM_005661095.2"/>
</dbReference>
<dbReference type="SMR" id="P0DSO0"/>
<dbReference type="FunCoup" id="P0DSO0">
    <property type="interactions" value="169"/>
</dbReference>
<dbReference type="Ensembl" id="ENSSSCT00030084562.1">
    <property type="protein sequence ID" value="ENSSSCP00030038920.1"/>
    <property type="gene ID" value="ENSSSCG00030060455.1"/>
</dbReference>
<dbReference type="Ensembl" id="ENSSSCT00040073111.1">
    <property type="protein sequence ID" value="ENSSSCP00040031274.1"/>
    <property type="gene ID" value="ENSSSCG00040054034.1"/>
</dbReference>
<dbReference type="GeneID" id="100525680"/>
<dbReference type="KEGG" id="ssc:100525680"/>
<dbReference type="CTD" id="6289"/>
<dbReference type="InParanoid" id="P0DSO0"/>
<dbReference type="OrthoDB" id="6112826at2759"/>
<dbReference type="Proteomes" id="UP000008227">
    <property type="component" value="Unplaced"/>
</dbReference>
<dbReference type="Proteomes" id="UP000314985">
    <property type="component" value="Unplaced"/>
</dbReference>
<dbReference type="Proteomes" id="UP000694570">
    <property type="component" value="Unplaced"/>
</dbReference>
<dbReference type="Proteomes" id="UP000694571">
    <property type="component" value="Unplaced"/>
</dbReference>
<dbReference type="Proteomes" id="UP000694720">
    <property type="component" value="Unplaced"/>
</dbReference>
<dbReference type="Proteomes" id="UP000694722">
    <property type="component" value="Unplaced"/>
</dbReference>
<dbReference type="Proteomes" id="UP000694723">
    <property type="component" value="Unplaced"/>
</dbReference>
<dbReference type="Proteomes" id="UP000694724">
    <property type="component" value="Unplaced"/>
</dbReference>
<dbReference type="Proteomes" id="UP000694725">
    <property type="component" value="Unplaced"/>
</dbReference>
<dbReference type="Proteomes" id="UP000694726">
    <property type="component" value="Unplaced"/>
</dbReference>
<dbReference type="Proteomes" id="UP000694727">
    <property type="component" value="Unplaced"/>
</dbReference>
<dbReference type="Proteomes" id="UP000694728">
    <property type="component" value="Unplaced"/>
</dbReference>
<dbReference type="GO" id="GO:0005576">
    <property type="term" value="C:extracellular region"/>
    <property type="evidence" value="ECO:0007669"/>
    <property type="project" value="UniProtKB-SubCell"/>
</dbReference>
<dbReference type="FunFam" id="1.10.132.110:FF:000001">
    <property type="entry name" value="Serum amyloid A protein"/>
    <property type="match status" value="1"/>
</dbReference>
<dbReference type="Gene3D" id="1.10.132.110">
    <property type="entry name" value="Serum amyloid A protein"/>
    <property type="match status" value="1"/>
</dbReference>
<dbReference type="InterPro" id="IPR000096">
    <property type="entry name" value="Serum_amyloid_A"/>
</dbReference>
<dbReference type="InterPro" id="IPR052464">
    <property type="entry name" value="Synovial_Prolif_Regulator"/>
</dbReference>
<dbReference type="PANTHER" id="PTHR23424">
    <property type="entry name" value="SERUM AMYLOID A"/>
    <property type="match status" value="1"/>
</dbReference>
<dbReference type="PANTHER" id="PTHR23424:SF30">
    <property type="entry name" value="SERUM AMYLOID A-2 PROTEIN"/>
    <property type="match status" value="1"/>
</dbReference>
<dbReference type="Pfam" id="PF00277">
    <property type="entry name" value="SAA"/>
    <property type="match status" value="1"/>
</dbReference>
<dbReference type="PIRSF" id="PIRSF002472">
    <property type="entry name" value="Serum_amyloid_A"/>
    <property type="match status" value="1"/>
</dbReference>
<dbReference type="PRINTS" id="PR00306">
    <property type="entry name" value="SERUMAMYLOID"/>
</dbReference>
<dbReference type="SMART" id="SM00197">
    <property type="entry name" value="SAA"/>
    <property type="match status" value="1"/>
</dbReference>
<dbReference type="PROSITE" id="PS00992">
    <property type="entry name" value="SAA"/>
    <property type="match status" value="1"/>
</dbReference>
<gene>
    <name evidence="4" type="primary">SAA2</name>
</gene>
<keyword id="KW-0873">Pyrrolidone carboxylic acid</keyword>
<keyword id="KW-1185">Reference proteome</keyword>
<keyword id="KW-0964">Secreted</keyword>
<keyword id="KW-0732">Signal</keyword>
<evidence type="ECO:0000250" key="1">
    <source>
        <dbReference type="UniProtKB" id="P02739"/>
    </source>
</evidence>
<evidence type="ECO:0000250" key="2">
    <source>
        <dbReference type="UniProtKB" id="P05366"/>
    </source>
</evidence>
<evidence type="ECO:0000250" key="3">
    <source>
        <dbReference type="UniProtKB" id="P0DJI8"/>
    </source>
</evidence>
<evidence type="ECO:0000250" key="4">
    <source>
        <dbReference type="UniProtKB" id="P0DJI9"/>
    </source>
</evidence>
<evidence type="ECO:0000256" key="5">
    <source>
        <dbReference type="SAM" id="MobiDB-lite"/>
    </source>
</evidence>
<evidence type="ECO:0000305" key="6"/>
<comment type="function">
    <text evidence="2">Major acute phase reactant.</text>
</comment>
<comment type="subunit">
    <text evidence="3">Apolipoprotein of the HDL complex.</text>
</comment>
<comment type="subcellular location">
    <subcellularLocation>
        <location evidence="3">Secreted</location>
    </subcellularLocation>
</comment>
<comment type="similarity">
    <text evidence="6">Belongs to the SAA family.</text>
</comment>
<feature type="signal peptide" evidence="1">
    <location>
        <begin position="1"/>
        <end position="18"/>
    </location>
</feature>
<feature type="chain" id="PRO_0000450366" description="Serum amyloid A-2 protein" evidence="1">
    <location>
        <begin position="19"/>
        <end position="129"/>
    </location>
</feature>
<feature type="chain" id="PRO_0000450367" description="Amyloid protein AA1" evidence="1">
    <location>
        <begin position="19"/>
        <end position="82"/>
    </location>
</feature>
<feature type="chain" id="PRO_0000450368" description="Amyloid protein AA2" evidence="1">
    <location>
        <begin position="19"/>
        <end position="71"/>
    </location>
</feature>
<feature type="region of interest" description="Disordered" evidence="5">
    <location>
        <begin position="90"/>
        <end position="129"/>
    </location>
</feature>
<feature type="compositionally biased region" description="Basic and acidic residues" evidence="5">
    <location>
        <begin position="90"/>
        <end position="103"/>
    </location>
</feature>
<feature type="modified residue" description="Pyrrolidone carboxylic acid" evidence="1">
    <location>
        <position position="19"/>
    </location>
</feature>
<proteinExistence type="inferred from homology"/>
<reference key="1">
    <citation type="submission" date="2009-11" db="EMBL/GenBank/DDBJ databases">
        <authorList>
            <consortium name="Porcine genome sequencing project"/>
        </authorList>
    </citation>
    <scope>NUCLEOTIDE SEQUENCE [LARGE SCALE GENOMIC DNA]</scope>
    <source>
        <strain>Duroc</strain>
    </source>
</reference>
<name>SAA2_PIG</name>
<organism>
    <name type="scientific">Sus scrofa</name>
    <name type="common">Pig</name>
    <dbReference type="NCBI Taxonomy" id="9823"/>
    <lineage>
        <taxon>Eukaryota</taxon>
        <taxon>Metazoa</taxon>
        <taxon>Chordata</taxon>
        <taxon>Craniata</taxon>
        <taxon>Vertebrata</taxon>
        <taxon>Euteleostomi</taxon>
        <taxon>Mammalia</taxon>
        <taxon>Eutheria</taxon>
        <taxon>Laurasiatheria</taxon>
        <taxon>Artiodactyla</taxon>
        <taxon>Suina</taxon>
        <taxon>Suidae</taxon>
        <taxon>Sus</taxon>
    </lineage>
</organism>
<accession>P0DSO0</accession>
<sequence length="129" mass="14418">MKLFTGLIFCSLVLGVHSQWLSFLGEAYEGAKDMLRAYSDMREANFKNSDKYFHARGNYDAAQRGPGGAWAAKVISDARENVQRVTDWLKHGDSGHGVEDSRADQAANEWGRSGKDPNHFRPPGLPDKY</sequence>